<gene>
    <name evidence="1" type="primary">rplF</name>
    <name type="ordered locus">EcE24377A_3788</name>
</gene>
<accession>A7ZSJ4</accession>
<feature type="chain" id="PRO_1000067977" description="Large ribosomal subunit protein uL6">
    <location>
        <begin position="1"/>
        <end position="177"/>
    </location>
</feature>
<feature type="modified residue" description="N6-acetyllysine" evidence="1">
    <location>
        <position position="44"/>
    </location>
</feature>
<name>RL6_ECO24</name>
<evidence type="ECO:0000255" key="1">
    <source>
        <dbReference type="HAMAP-Rule" id="MF_01365"/>
    </source>
</evidence>
<evidence type="ECO:0000305" key="2"/>
<proteinExistence type="inferred from homology"/>
<reference key="1">
    <citation type="journal article" date="2008" name="J. Bacteriol.">
        <title>The pangenome structure of Escherichia coli: comparative genomic analysis of E. coli commensal and pathogenic isolates.</title>
        <authorList>
            <person name="Rasko D.A."/>
            <person name="Rosovitz M.J."/>
            <person name="Myers G.S.A."/>
            <person name="Mongodin E.F."/>
            <person name="Fricke W.F."/>
            <person name="Gajer P."/>
            <person name="Crabtree J."/>
            <person name="Sebaihia M."/>
            <person name="Thomson N.R."/>
            <person name="Chaudhuri R."/>
            <person name="Henderson I.R."/>
            <person name="Sperandio V."/>
            <person name="Ravel J."/>
        </authorList>
    </citation>
    <scope>NUCLEOTIDE SEQUENCE [LARGE SCALE GENOMIC DNA]</scope>
    <source>
        <strain>E24377A / ETEC</strain>
    </source>
</reference>
<keyword id="KW-0007">Acetylation</keyword>
<keyword id="KW-1185">Reference proteome</keyword>
<keyword id="KW-0687">Ribonucleoprotein</keyword>
<keyword id="KW-0689">Ribosomal protein</keyword>
<keyword id="KW-0694">RNA-binding</keyword>
<keyword id="KW-0699">rRNA-binding</keyword>
<sequence length="177" mass="18904">MSRVAKAPVVVPAGVDVKINGQVITIKGKNGELTRTLNDAVEVKHADNTLTFGPRDGYADGWAQAGTARALLNSMVIGVTEGFTKKLQLVGVGYRAAVKGNVINLSLGFSHPVDHQLPAGITAECPTQTEIVLKGADKQVIGQVAADLRAYRRPEPYKGKGVRYADEVVRTKEAKKK</sequence>
<comment type="function">
    <text evidence="1">This protein binds to the 23S rRNA, and is important in its secondary structure. It is located near the subunit interface in the base of the L7/L12 stalk, and near the tRNA binding site of the peptidyltransferase center.</text>
</comment>
<comment type="subunit">
    <text evidence="1">Part of the 50S ribosomal subunit.</text>
</comment>
<comment type="similarity">
    <text evidence="1">Belongs to the universal ribosomal protein uL6 family.</text>
</comment>
<dbReference type="EMBL" id="CP000800">
    <property type="protein sequence ID" value="ABV20306.1"/>
    <property type="molecule type" value="Genomic_DNA"/>
</dbReference>
<dbReference type="RefSeq" id="WP_000091945.1">
    <property type="nucleotide sequence ID" value="NC_009801.1"/>
</dbReference>
<dbReference type="SMR" id="A7ZSJ4"/>
<dbReference type="GeneID" id="86948169"/>
<dbReference type="KEGG" id="ecw:EcE24377A_3788"/>
<dbReference type="HOGENOM" id="CLU_065464_1_2_6"/>
<dbReference type="Proteomes" id="UP000001122">
    <property type="component" value="Chromosome"/>
</dbReference>
<dbReference type="GO" id="GO:0022625">
    <property type="term" value="C:cytosolic large ribosomal subunit"/>
    <property type="evidence" value="ECO:0007669"/>
    <property type="project" value="TreeGrafter"/>
</dbReference>
<dbReference type="GO" id="GO:0019843">
    <property type="term" value="F:rRNA binding"/>
    <property type="evidence" value="ECO:0007669"/>
    <property type="project" value="UniProtKB-UniRule"/>
</dbReference>
<dbReference type="GO" id="GO:0003735">
    <property type="term" value="F:structural constituent of ribosome"/>
    <property type="evidence" value="ECO:0007669"/>
    <property type="project" value="InterPro"/>
</dbReference>
<dbReference type="GO" id="GO:0002181">
    <property type="term" value="P:cytoplasmic translation"/>
    <property type="evidence" value="ECO:0007669"/>
    <property type="project" value="TreeGrafter"/>
</dbReference>
<dbReference type="FunFam" id="3.90.930.12:FF:000001">
    <property type="entry name" value="50S ribosomal protein L6"/>
    <property type="match status" value="1"/>
</dbReference>
<dbReference type="FunFam" id="3.90.930.12:FF:000002">
    <property type="entry name" value="50S ribosomal protein L6"/>
    <property type="match status" value="1"/>
</dbReference>
<dbReference type="Gene3D" id="3.90.930.12">
    <property type="entry name" value="Ribosomal protein L6, alpha-beta domain"/>
    <property type="match status" value="2"/>
</dbReference>
<dbReference type="HAMAP" id="MF_01365_B">
    <property type="entry name" value="Ribosomal_uL6_B"/>
    <property type="match status" value="1"/>
</dbReference>
<dbReference type="InterPro" id="IPR000702">
    <property type="entry name" value="Ribosomal_uL6-like"/>
</dbReference>
<dbReference type="InterPro" id="IPR036789">
    <property type="entry name" value="Ribosomal_uL6-like_a/b-dom_sf"/>
</dbReference>
<dbReference type="InterPro" id="IPR020040">
    <property type="entry name" value="Ribosomal_uL6_a/b-dom"/>
</dbReference>
<dbReference type="InterPro" id="IPR019906">
    <property type="entry name" value="Ribosomal_uL6_bac-type"/>
</dbReference>
<dbReference type="InterPro" id="IPR002358">
    <property type="entry name" value="Ribosomal_uL6_CS"/>
</dbReference>
<dbReference type="NCBIfam" id="TIGR03654">
    <property type="entry name" value="L6_bact"/>
    <property type="match status" value="1"/>
</dbReference>
<dbReference type="PANTHER" id="PTHR11655">
    <property type="entry name" value="60S/50S RIBOSOMAL PROTEIN L6/L9"/>
    <property type="match status" value="1"/>
</dbReference>
<dbReference type="PANTHER" id="PTHR11655:SF14">
    <property type="entry name" value="LARGE RIBOSOMAL SUBUNIT PROTEIN UL6M"/>
    <property type="match status" value="1"/>
</dbReference>
<dbReference type="Pfam" id="PF00347">
    <property type="entry name" value="Ribosomal_L6"/>
    <property type="match status" value="2"/>
</dbReference>
<dbReference type="PIRSF" id="PIRSF002162">
    <property type="entry name" value="Ribosomal_L6"/>
    <property type="match status" value="1"/>
</dbReference>
<dbReference type="PRINTS" id="PR00059">
    <property type="entry name" value="RIBOSOMALL6"/>
</dbReference>
<dbReference type="SUPFAM" id="SSF56053">
    <property type="entry name" value="Ribosomal protein L6"/>
    <property type="match status" value="2"/>
</dbReference>
<dbReference type="PROSITE" id="PS00525">
    <property type="entry name" value="RIBOSOMAL_L6_1"/>
    <property type="match status" value="1"/>
</dbReference>
<protein>
    <recommendedName>
        <fullName evidence="1">Large ribosomal subunit protein uL6</fullName>
    </recommendedName>
    <alternativeName>
        <fullName evidence="2">50S ribosomal protein L6</fullName>
    </alternativeName>
</protein>
<organism>
    <name type="scientific">Escherichia coli O139:H28 (strain E24377A / ETEC)</name>
    <dbReference type="NCBI Taxonomy" id="331111"/>
    <lineage>
        <taxon>Bacteria</taxon>
        <taxon>Pseudomonadati</taxon>
        <taxon>Pseudomonadota</taxon>
        <taxon>Gammaproteobacteria</taxon>
        <taxon>Enterobacterales</taxon>
        <taxon>Enterobacteriaceae</taxon>
        <taxon>Escherichia</taxon>
    </lineage>
</organism>